<evidence type="ECO:0000255" key="1">
    <source>
        <dbReference type="HAMAP-Rule" id="MF_00111"/>
    </source>
</evidence>
<comment type="function">
    <text evidence="1">Cell wall formation. Adds enolpyruvyl to UDP-N-acetylglucosamine.</text>
</comment>
<comment type="catalytic activity">
    <reaction evidence="1">
        <text>phosphoenolpyruvate + UDP-N-acetyl-alpha-D-glucosamine = UDP-N-acetyl-3-O-(1-carboxyvinyl)-alpha-D-glucosamine + phosphate</text>
        <dbReference type="Rhea" id="RHEA:18681"/>
        <dbReference type="ChEBI" id="CHEBI:43474"/>
        <dbReference type="ChEBI" id="CHEBI:57705"/>
        <dbReference type="ChEBI" id="CHEBI:58702"/>
        <dbReference type="ChEBI" id="CHEBI:68483"/>
        <dbReference type="EC" id="2.5.1.7"/>
    </reaction>
</comment>
<comment type="pathway">
    <text evidence="1">Cell wall biogenesis; peptidoglycan biosynthesis.</text>
</comment>
<comment type="subcellular location">
    <subcellularLocation>
        <location evidence="1">Cytoplasm</location>
    </subcellularLocation>
</comment>
<comment type="similarity">
    <text evidence="1">Belongs to the EPSP synthase family. MurA subfamily.</text>
</comment>
<keyword id="KW-0131">Cell cycle</keyword>
<keyword id="KW-0132">Cell division</keyword>
<keyword id="KW-0133">Cell shape</keyword>
<keyword id="KW-0961">Cell wall biogenesis/degradation</keyword>
<keyword id="KW-0963">Cytoplasm</keyword>
<keyword id="KW-0573">Peptidoglycan synthesis</keyword>
<keyword id="KW-0670">Pyruvate</keyword>
<keyword id="KW-0808">Transferase</keyword>
<organism>
    <name type="scientific">Neisseria meningitidis serogroup C / serotype 2a (strain ATCC 700532 / DSM 15464 / FAM18)</name>
    <dbReference type="NCBI Taxonomy" id="272831"/>
    <lineage>
        <taxon>Bacteria</taxon>
        <taxon>Pseudomonadati</taxon>
        <taxon>Pseudomonadota</taxon>
        <taxon>Betaproteobacteria</taxon>
        <taxon>Neisseriales</taxon>
        <taxon>Neisseriaceae</taxon>
        <taxon>Neisseria</taxon>
    </lineage>
</organism>
<gene>
    <name evidence="1" type="primary">murA</name>
    <name type="ordered locus">NMC2149</name>
</gene>
<dbReference type="EC" id="2.5.1.7" evidence="1"/>
<dbReference type="EMBL" id="AM421808">
    <property type="protein sequence ID" value="CAM11297.1"/>
    <property type="molecule type" value="Genomic_DNA"/>
</dbReference>
<dbReference type="RefSeq" id="WP_002221762.1">
    <property type="nucleotide sequence ID" value="NC_008767.1"/>
</dbReference>
<dbReference type="SMR" id="A1KWN7"/>
<dbReference type="GeneID" id="93387091"/>
<dbReference type="KEGG" id="nmc:NMC2149"/>
<dbReference type="HOGENOM" id="CLU_027387_0_0_4"/>
<dbReference type="UniPathway" id="UPA00219"/>
<dbReference type="Proteomes" id="UP000002286">
    <property type="component" value="Chromosome"/>
</dbReference>
<dbReference type="GO" id="GO:0005737">
    <property type="term" value="C:cytoplasm"/>
    <property type="evidence" value="ECO:0007669"/>
    <property type="project" value="UniProtKB-SubCell"/>
</dbReference>
<dbReference type="GO" id="GO:0008760">
    <property type="term" value="F:UDP-N-acetylglucosamine 1-carboxyvinyltransferase activity"/>
    <property type="evidence" value="ECO:0007669"/>
    <property type="project" value="UniProtKB-UniRule"/>
</dbReference>
<dbReference type="GO" id="GO:0051301">
    <property type="term" value="P:cell division"/>
    <property type="evidence" value="ECO:0007669"/>
    <property type="project" value="UniProtKB-KW"/>
</dbReference>
<dbReference type="GO" id="GO:0071555">
    <property type="term" value="P:cell wall organization"/>
    <property type="evidence" value="ECO:0007669"/>
    <property type="project" value="UniProtKB-KW"/>
</dbReference>
<dbReference type="GO" id="GO:0009252">
    <property type="term" value="P:peptidoglycan biosynthetic process"/>
    <property type="evidence" value="ECO:0007669"/>
    <property type="project" value="UniProtKB-UniRule"/>
</dbReference>
<dbReference type="GO" id="GO:0008360">
    <property type="term" value="P:regulation of cell shape"/>
    <property type="evidence" value="ECO:0007669"/>
    <property type="project" value="UniProtKB-KW"/>
</dbReference>
<dbReference type="GO" id="GO:0019277">
    <property type="term" value="P:UDP-N-acetylgalactosamine biosynthetic process"/>
    <property type="evidence" value="ECO:0007669"/>
    <property type="project" value="InterPro"/>
</dbReference>
<dbReference type="CDD" id="cd01555">
    <property type="entry name" value="UdpNAET"/>
    <property type="match status" value="1"/>
</dbReference>
<dbReference type="FunFam" id="3.65.10.10:FF:000002">
    <property type="entry name" value="UDP-N-acetylglucosamine 1-carboxyvinyltransferase"/>
    <property type="match status" value="1"/>
</dbReference>
<dbReference type="Gene3D" id="3.65.10.10">
    <property type="entry name" value="Enolpyruvate transferase domain"/>
    <property type="match status" value="2"/>
</dbReference>
<dbReference type="HAMAP" id="MF_00111">
    <property type="entry name" value="MurA"/>
    <property type="match status" value="1"/>
</dbReference>
<dbReference type="InterPro" id="IPR001986">
    <property type="entry name" value="Enolpyruvate_Tfrase_dom"/>
</dbReference>
<dbReference type="InterPro" id="IPR036968">
    <property type="entry name" value="Enolpyruvate_Tfrase_sf"/>
</dbReference>
<dbReference type="InterPro" id="IPR050068">
    <property type="entry name" value="MurA_subfamily"/>
</dbReference>
<dbReference type="InterPro" id="IPR013792">
    <property type="entry name" value="RNA3'P_cycl/enolpyr_Trfase_a/b"/>
</dbReference>
<dbReference type="InterPro" id="IPR005750">
    <property type="entry name" value="UDP_GlcNAc_COvinyl_MurA"/>
</dbReference>
<dbReference type="NCBIfam" id="TIGR01072">
    <property type="entry name" value="murA"/>
    <property type="match status" value="1"/>
</dbReference>
<dbReference type="NCBIfam" id="NF006873">
    <property type="entry name" value="PRK09369.1"/>
    <property type="match status" value="1"/>
</dbReference>
<dbReference type="PANTHER" id="PTHR43783">
    <property type="entry name" value="UDP-N-ACETYLGLUCOSAMINE 1-CARBOXYVINYLTRANSFERASE"/>
    <property type="match status" value="1"/>
</dbReference>
<dbReference type="PANTHER" id="PTHR43783:SF1">
    <property type="entry name" value="UDP-N-ACETYLGLUCOSAMINE 1-CARBOXYVINYLTRANSFERASE"/>
    <property type="match status" value="1"/>
</dbReference>
<dbReference type="Pfam" id="PF00275">
    <property type="entry name" value="EPSP_synthase"/>
    <property type="match status" value="1"/>
</dbReference>
<dbReference type="SUPFAM" id="SSF55205">
    <property type="entry name" value="EPT/RTPC-like"/>
    <property type="match status" value="1"/>
</dbReference>
<reference key="1">
    <citation type="journal article" date="2007" name="PLoS Genet.">
        <title>Meningococcal genetic variation mechanisms viewed through comparative analysis of serogroup C strain FAM18.</title>
        <authorList>
            <person name="Bentley S.D."/>
            <person name="Vernikos G.S."/>
            <person name="Snyder L.A.S."/>
            <person name="Churcher C."/>
            <person name="Arrowsmith C."/>
            <person name="Chillingworth T."/>
            <person name="Cronin A."/>
            <person name="Davis P.H."/>
            <person name="Holroyd N.E."/>
            <person name="Jagels K."/>
            <person name="Maddison M."/>
            <person name="Moule S."/>
            <person name="Rabbinowitsch E."/>
            <person name="Sharp S."/>
            <person name="Unwin L."/>
            <person name="Whitehead S."/>
            <person name="Quail M.A."/>
            <person name="Achtman M."/>
            <person name="Barrell B.G."/>
            <person name="Saunders N.J."/>
            <person name="Parkhill J."/>
        </authorList>
    </citation>
    <scope>NUCLEOTIDE SEQUENCE [LARGE SCALE GENOMIC DNA]</scope>
    <source>
        <strain>ATCC 700532 / DSM 15464 / FAM18</strain>
    </source>
</reference>
<feature type="chain" id="PRO_1000023058" description="UDP-N-acetylglucosamine 1-carboxyvinyltransferase">
    <location>
        <begin position="1"/>
        <end position="417"/>
    </location>
</feature>
<feature type="active site" description="Proton donor" evidence="1">
    <location>
        <position position="117"/>
    </location>
</feature>
<feature type="binding site" evidence="1">
    <location>
        <begin position="22"/>
        <end position="23"/>
    </location>
    <ligand>
        <name>phosphoenolpyruvate</name>
        <dbReference type="ChEBI" id="CHEBI:58702"/>
    </ligand>
</feature>
<feature type="binding site" evidence="1">
    <location>
        <position position="93"/>
    </location>
    <ligand>
        <name>UDP-N-acetyl-alpha-D-glucosamine</name>
        <dbReference type="ChEBI" id="CHEBI:57705"/>
    </ligand>
</feature>
<feature type="binding site" evidence="1">
    <location>
        <begin position="122"/>
        <end position="126"/>
    </location>
    <ligand>
        <name>UDP-N-acetyl-alpha-D-glucosamine</name>
        <dbReference type="ChEBI" id="CHEBI:57705"/>
    </ligand>
</feature>
<feature type="binding site" evidence="1">
    <location>
        <position position="304"/>
    </location>
    <ligand>
        <name>UDP-N-acetyl-alpha-D-glucosamine</name>
        <dbReference type="ChEBI" id="CHEBI:57705"/>
    </ligand>
</feature>
<feature type="binding site" evidence="1">
    <location>
        <position position="326"/>
    </location>
    <ligand>
        <name>UDP-N-acetyl-alpha-D-glucosamine</name>
        <dbReference type="ChEBI" id="CHEBI:57705"/>
    </ligand>
</feature>
<feature type="modified residue" description="2-(S-cysteinyl)pyruvic acid O-phosphothioketal" evidence="1">
    <location>
        <position position="117"/>
    </location>
</feature>
<name>MURA_NEIMF</name>
<sequence length="417" mass="43982">MDKLKISANGPLNGEITVSGAKNAALPLMCAGLLTSGTLRLKNVPMLADVKTTQKLLQGMGARVLTDNISEFEINGGTVNNTCAPYELVRTMRASILVLGPTLARFGEAQVSLPGGCAIGSRPVDQHLKGLEAMGAEIVIEHGYVKAKGKLKGTRVAMDVVTVGGTENLLMAATLAEGTTVLENCAIEPEVVDLAECLVKMGAKISGIGTSTMIVEGVDELHGCEHSVVPDRIEAGTFLCAVAITGGRVVLRNAAPKTMEVVLDKLVEAGAVIEAGDDWIAIDMRQRPKAVDIRTVVHPGFPTDMQAQFMALNAVAEGSCRVVETIFENRFMHVPELNRMGANITTEGNTAFVQGVERLSGAVVKATDLRASASLVIAGLAARGETVVEQIYHLDRGYENIEKKLGSVGAKIERVSG</sequence>
<accession>A1KWN7</accession>
<protein>
    <recommendedName>
        <fullName evidence="1">UDP-N-acetylglucosamine 1-carboxyvinyltransferase</fullName>
        <ecNumber evidence="1">2.5.1.7</ecNumber>
    </recommendedName>
    <alternativeName>
        <fullName evidence="1">Enoylpyruvate transferase</fullName>
    </alternativeName>
    <alternativeName>
        <fullName evidence="1">UDP-N-acetylglucosamine enolpyruvyl transferase</fullName>
        <shortName evidence="1">EPT</shortName>
    </alternativeName>
</protein>
<proteinExistence type="inferred from homology"/>